<feature type="chain" id="PRO_1000118610" description="4-hydroxy-3-methylbut-2-enyl diphosphate reductase">
    <location>
        <begin position="1"/>
        <end position="316"/>
    </location>
</feature>
<feature type="active site" description="Proton donor" evidence="1">
    <location>
        <position position="126"/>
    </location>
</feature>
<feature type="binding site" evidence="1">
    <location>
        <position position="12"/>
    </location>
    <ligand>
        <name>[4Fe-4S] cluster</name>
        <dbReference type="ChEBI" id="CHEBI:49883"/>
    </ligand>
</feature>
<feature type="binding site" evidence="1">
    <location>
        <position position="41"/>
    </location>
    <ligand>
        <name>(2E)-4-hydroxy-3-methylbut-2-enyl diphosphate</name>
        <dbReference type="ChEBI" id="CHEBI:128753"/>
    </ligand>
</feature>
<feature type="binding site" evidence="1">
    <location>
        <position position="41"/>
    </location>
    <ligand>
        <name>dimethylallyl diphosphate</name>
        <dbReference type="ChEBI" id="CHEBI:57623"/>
    </ligand>
</feature>
<feature type="binding site" evidence="1">
    <location>
        <position position="41"/>
    </location>
    <ligand>
        <name>isopentenyl diphosphate</name>
        <dbReference type="ChEBI" id="CHEBI:128769"/>
    </ligand>
</feature>
<feature type="binding site" evidence="1">
    <location>
        <position position="74"/>
    </location>
    <ligand>
        <name>(2E)-4-hydroxy-3-methylbut-2-enyl diphosphate</name>
        <dbReference type="ChEBI" id="CHEBI:128753"/>
    </ligand>
</feature>
<feature type="binding site" evidence="1">
    <location>
        <position position="74"/>
    </location>
    <ligand>
        <name>dimethylallyl diphosphate</name>
        <dbReference type="ChEBI" id="CHEBI:57623"/>
    </ligand>
</feature>
<feature type="binding site" evidence="1">
    <location>
        <position position="74"/>
    </location>
    <ligand>
        <name>isopentenyl diphosphate</name>
        <dbReference type="ChEBI" id="CHEBI:128769"/>
    </ligand>
</feature>
<feature type="binding site" evidence="1">
    <location>
        <position position="96"/>
    </location>
    <ligand>
        <name>[4Fe-4S] cluster</name>
        <dbReference type="ChEBI" id="CHEBI:49883"/>
    </ligand>
</feature>
<feature type="binding site" evidence="1">
    <location>
        <position position="124"/>
    </location>
    <ligand>
        <name>(2E)-4-hydroxy-3-methylbut-2-enyl diphosphate</name>
        <dbReference type="ChEBI" id="CHEBI:128753"/>
    </ligand>
</feature>
<feature type="binding site" evidence="1">
    <location>
        <position position="124"/>
    </location>
    <ligand>
        <name>dimethylallyl diphosphate</name>
        <dbReference type="ChEBI" id="CHEBI:57623"/>
    </ligand>
</feature>
<feature type="binding site" evidence="1">
    <location>
        <position position="124"/>
    </location>
    <ligand>
        <name>isopentenyl diphosphate</name>
        <dbReference type="ChEBI" id="CHEBI:128769"/>
    </ligand>
</feature>
<feature type="binding site" evidence="1">
    <location>
        <position position="167"/>
    </location>
    <ligand>
        <name>(2E)-4-hydroxy-3-methylbut-2-enyl diphosphate</name>
        <dbReference type="ChEBI" id="CHEBI:128753"/>
    </ligand>
</feature>
<feature type="binding site" evidence="1">
    <location>
        <position position="197"/>
    </location>
    <ligand>
        <name>[4Fe-4S] cluster</name>
        <dbReference type="ChEBI" id="CHEBI:49883"/>
    </ligand>
</feature>
<feature type="binding site" evidence="1">
    <location>
        <position position="225"/>
    </location>
    <ligand>
        <name>(2E)-4-hydroxy-3-methylbut-2-enyl diphosphate</name>
        <dbReference type="ChEBI" id="CHEBI:128753"/>
    </ligand>
</feature>
<feature type="binding site" evidence="1">
    <location>
        <position position="225"/>
    </location>
    <ligand>
        <name>dimethylallyl diphosphate</name>
        <dbReference type="ChEBI" id="CHEBI:57623"/>
    </ligand>
</feature>
<feature type="binding site" evidence="1">
    <location>
        <position position="225"/>
    </location>
    <ligand>
        <name>isopentenyl diphosphate</name>
        <dbReference type="ChEBI" id="CHEBI:128769"/>
    </ligand>
</feature>
<feature type="binding site" evidence="1">
    <location>
        <position position="226"/>
    </location>
    <ligand>
        <name>(2E)-4-hydroxy-3-methylbut-2-enyl diphosphate</name>
        <dbReference type="ChEBI" id="CHEBI:128753"/>
    </ligand>
</feature>
<feature type="binding site" evidence="1">
    <location>
        <position position="226"/>
    </location>
    <ligand>
        <name>dimethylallyl diphosphate</name>
        <dbReference type="ChEBI" id="CHEBI:57623"/>
    </ligand>
</feature>
<feature type="binding site" evidence="1">
    <location>
        <position position="226"/>
    </location>
    <ligand>
        <name>isopentenyl diphosphate</name>
        <dbReference type="ChEBI" id="CHEBI:128769"/>
    </ligand>
</feature>
<feature type="binding site" evidence="1">
    <location>
        <position position="227"/>
    </location>
    <ligand>
        <name>(2E)-4-hydroxy-3-methylbut-2-enyl diphosphate</name>
        <dbReference type="ChEBI" id="CHEBI:128753"/>
    </ligand>
</feature>
<feature type="binding site" evidence="1">
    <location>
        <position position="227"/>
    </location>
    <ligand>
        <name>dimethylallyl diphosphate</name>
        <dbReference type="ChEBI" id="CHEBI:57623"/>
    </ligand>
</feature>
<feature type="binding site" evidence="1">
    <location>
        <position position="227"/>
    </location>
    <ligand>
        <name>isopentenyl diphosphate</name>
        <dbReference type="ChEBI" id="CHEBI:128769"/>
    </ligand>
</feature>
<feature type="binding site" evidence="1">
    <location>
        <position position="269"/>
    </location>
    <ligand>
        <name>(2E)-4-hydroxy-3-methylbut-2-enyl diphosphate</name>
        <dbReference type="ChEBI" id="CHEBI:128753"/>
    </ligand>
</feature>
<feature type="binding site" evidence="1">
    <location>
        <position position="269"/>
    </location>
    <ligand>
        <name>dimethylallyl diphosphate</name>
        <dbReference type="ChEBI" id="CHEBI:57623"/>
    </ligand>
</feature>
<feature type="binding site" evidence="1">
    <location>
        <position position="269"/>
    </location>
    <ligand>
        <name>isopentenyl diphosphate</name>
        <dbReference type="ChEBI" id="CHEBI:128769"/>
    </ligand>
</feature>
<reference key="1">
    <citation type="journal article" date="2008" name="J. Bacteriol.">
        <title>Insights into the environmental resistance gene pool from the genome sequence of the multidrug-resistant environmental isolate Escherichia coli SMS-3-5.</title>
        <authorList>
            <person name="Fricke W.F."/>
            <person name="Wright M.S."/>
            <person name="Lindell A.H."/>
            <person name="Harkins D.M."/>
            <person name="Baker-Austin C."/>
            <person name="Ravel J."/>
            <person name="Stepanauskas R."/>
        </authorList>
    </citation>
    <scope>NUCLEOTIDE SEQUENCE [LARGE SCALE GENOMIC DNA]</scope>
    <source>
        <strain>SMS-3-5 / SECEC</strain>
    </source>
</reference>
<comment type="function">
    <text evidence="1">Catalyzes the conversion of 1-hydroxy-2-methyl-2-(E)-butenyl 4-diphosphate (HMBPP) into a mixture of isopentenyl diphosphate (IPP) and dimethylallyl diphosphate (DMAPP). Acts in the terminal step of the DOXP/MEP pathway for isoprenoid precursor biosynthesis.</text>
</comment>
<comment type="catalytic activity">
    <reaction evidence="1">
        <text>isopentenyl diphosphate + 2 oxidized [2Fe-2S]-[ferredoxin] + H2O = (2E)-4-hydroxy-3-methylbut-2-enyl diphosphate + 2 reduced [2Fe-2S]-[ferredoxin] + 2 H(+)</text>
        <dbReference type="Rhea" id="RHEA:24488"/>
        <dbReference type="Rhea" id="RHEA-COMP:10000"/>
        <dbReference type="Rhea" id="RHEA-COMP:10001"/>
        <dbReference type="ChEBI" id="CHEBI:15377"/>
        <dbReference type="ChEBI" id="CHEBI:15378"/>
        <dbReference type="ChEBI" id="CHEBI:33737"/>
        <dbReference type="ChEBI" id="CHEBI:33738"/>
        <dbReference type="ChEBI" id="CHEBI:128753"/>
        <dbReference type="ChEBI" id="CHEBI:128769"/>
        <dbReference type="EC" id="1.17.7.4"/>
    </reaction>
</comment>
<comment type="catalytic activity">
    <reaction evidence="1">
        <text>dimethylallyl diphosphate + 2 oxidized [2Fe-2S]-[ferredoxin] + H2O = (2E)-4-hydroxy-3-methylbut-2-enyl diphosphate + 2 reduced [2Fe-2S]-[ferredoxin] + 2 H(+)</text>
        <dbReference type="Rhea" id="RHEA:24825"/>
        <dbReference type="Rhea" id="RHEA-COMP:10000"/>
        <dbReference type="Rhea" id="RHEA-COMP:10001"/>
        <dbReference type="ChEBI" id="CHEBI:15377"/>
        <dbReference type="ChEBI" id="CHEBI:15378"/>
        <dbReference type="ChEBI" id="CHEBI:33737"/>
        <dbReference type="ChEBI" id="CHEBI:33738"/>
        <dbReference type="ChEBI" id="CHEBI:57623"/>
        <dbReference type="ChEBI" id="CHEBI:128753"/>
        <dbReference type="EC" id="1.17.7.4"/>
    </reaction>
</comment>
<comment type="cofactor">
    <cofactor evidence="1">
        <name>[4Fe-4S] cluster</name>
        <dbReference type="ChEBI" id="CHEBI:49883"/>
    </cofactor>
    <text evidence="1">Binds 1 [4Fe-4S] cluster per subunit.</text>
</comment>
<comment type="pathway">
    <text evidence="1">Isoprenoid biosynthesis; dimethylallyl diphosphate biosynthesis; dimethylallyl diphosphate from (2E)-4-hydroxy-3-methylbutenyl diphosphate: step 1/1.</text>
</comment>
<comment type="pathway">
    <text evidence="1">Isoprenoid biosynthesis; isopentenyl diphosphate biosynthesis via DXP pathway; isopentenyl diphosphate from 1-deoxy-D-xylulose 5-phosphate: step 6/6.</text>
</comment>
<comment type="subunit">
    <text evidence="1">Homodimer.</text>
</comment>
<comment type="similarity">
    <text evidence="1">Belongs to the IspH family.</text>
</comment>
<evidence type="ECO:0000255" key="1">
    <source>
        <dbReference type="HAMAP-Rule" id="MF_00191"/>
    </source>
</evidence>
<accession>B1LFV9</accession>
<organism>
    <name type="scientific">Escherichia coli (strain SMS-3-5 / SECEC)</name>
    <dbReference type="NCBI Taxonomy" id="439855"/>
    <lineage>
        <taxon>Bacteria</taxon>
        <taxon>Pseudomonadati</taxon>
        <taxon>Pseudomonadota</taxon>
        <taxon>Gammaproteobacteria</taxon>
        <taxon>Enterobacterales</taxon>
        <taxon>Enterobacteriaceae</taxon>
        <taxon>Escherichia</taxon>
    </lineage>
</organism>
<gene>
    <name evidence="1" type="primary">ispH</name>
    <name type="ordered locus">EcSMS35_0027</name>
</gene>
<dbReference type="EC" id="1.17.7.4" evidence="1"/>
<dbReference type="EMBL" id="CP000970">
    <property type="protein sequence ID" value="ACB20171.1"/>
    <property type="molecule type" value="Genomic_DNA"/>
</dbReference>
<dbReference type="RefSeq" id="WP_001166395.1">
    <property type="nucleotide sequence ID" value="NC_010498.1"/>
</dbReference>
<dbReference type="SMR" id="B1LFV9"/>
<dbReference type="GeneID" id="93777407"/>
<dbReference type="KEGG" id="ecm:EcSMS35_0027"/>
<dbReference type="HOGENOM" id="CLU_027486_1_0_6"/>
<dbReference type="UniPathway" id="UPA00056">
    <property type="reaction ID" value="UER00097"/>
</dbReference>
<dbReference type="UniPathway" id="UPA00059">
    <property type="reaction ID" value="UER00105"/>
</dbReference>
<dbReference type="Proteomes" id="UP000007011">
    <property type="component" value="Chromosome"/>
</dbReference>
<dbReference type="GO" id="GO:0051539">
    <property type="term" value="F:4 iron, 4 sulfur cluster binding"/>
    <property type="evidence" value="ECO:0007669"/>
    <property type="project" value="UniProtKB-UniRule"/>
</dbReference>
<dbReference type="GO" id="GO:0051745">
    <property type="term" value="F:4-hydroxy-3-methylbut-2-enyl diphosphate reductase activity"/>
    <property type="evidence" value="ECO:0007669"/>
    <property type="project" value="UniProtKB-UniRule"/>
</dbReference>
<dbReference type="GO" id="GO:0046872">
    <property type="term" value="F:metal ion binding"/>
    <property type="evidence" value="ECO:0007669"/>
    <property type="project" value="UniProtKB-KW"/>
</dbReference>
<dbReference type="GO" id="GO:0050992">
    <property type="term" value="P:dimethylallyl diphosphate biosynthetic process"/>
    <property type="evidence" value="ECO:0007669"/>
    <property type="project" value="UniProtKB-UniRule"/>
</dbReference>
<dbReference type="GO" id="GO:0019288">
    <property type="term" value="P:isopentenyl diphosphate biosynthetic process, methylerythritol 4-phosphate pathway"/>
    <property type="evidence" value="ECO:0007669"/>
    <property type="project" value="UniProtKB-UniRule"/>
</dbReference>
<dbReference type="GO" id="GO:0016114">
    <property type="term" value="P:terpenoid biosynthetic process"/>
    <property type="evidence" value="ECO:0007669"/>
    <property type="project" value="UniProtKB-UniRule"/>
</dbReference>
<dbReference type="CDD" id="cd13944">
    <property type="entry name" value="lytB_ispH"/>
    <property type="match status" value="1"/>
</dbReference>
<dbReference type="FunFam" id="3.40.1010.20:FF:000001">
    <property type="entry name" value="4-hydroxy-3-methylbut-2-enyl diphosphate reductase"/>
    <property type="match status" value="1"/>
</dbReference>
<dbReference type="FunFam" id="3.40.50.11270:FF:000001">
    <property type="entry name" value="4-hydroxy-3-methylbut-2-enyl diphosphate reductase"/>
    <property type="match status" value="1"/>
</dbReference>
<dbReference type="Gene3D" id="3.40.50.11270">
    <property type="match status" value="1"/>
</dbReference>
<dbReference type="Gene3D" id="3.40.1010.20">
    <property type="entry name" value="4-hydroxy-3-methylbut-2-enyl diphosphate reductase, catalytic domain"/>
    <property type="match status" value="2"/>
</dbReference>
<dbReference type="HAMAP" id="MF_00191">
    <property type="entry name" value="IspH"/>
    <property type="match status" value="1"/>
</dbReference>
<dbReference type="InterPro" id="IPR003451">
    <property type="entry name" value="LytB/IspH"/>
</dbReference>
<dbReference type="NCBIfam" id="TIGR00216">
    <property type="entry name" value="ispH_lytB"/>
    <property type="match status" value="1"/>
</dbReference>
<dbReference type="NCBIfam" id="NF002188">
    <property type="entry name" value="PRK01045.1-2"/>
    <property type="match status" value="1"/>
</dbReference>
<dbReference type="NCBIfam" id="NF002190">
    <property type="entry name" value="PRK01045.1-4"/>
    <property type="match status" value="1"/>
</dbReference>
<dbReference type="PANTHER" id="PTHR30426">
    <property type="entry name" value="4-HYDROXY-3-METHYLBUT-2-ENYL DIPHOSPHATE REDUCTASE"/>
    <property type="match status" value="1"/>
</dbReference>
<dbReference type="PANTHER" id="PTHR30426:SF0">
    <property type="entry name" value="4-HYDROXY-3-METHYLBUT-2-ENYL DIPHOSPHATE REDUCTASE"/>
    <property type="match status" value="1"/>
</dbReference>
<dbReference type="Pfam" id="PF02401">
    <property type="entry name" value="LYTB"/>
    <property type="match status" value="1"/>
</dbReference>
<protein>
    <recommendedName>
        <fullName evidence="1">4-hydroxy-3-methylbut-2-enyl diphosphate reductase</fullName>
        <shortName evidence="1">HMBPP reductase</shortName>
        <ecNumber evidence="1">1.17.7.4</ecNumber>
    </recommendedName>
</protein>
<keyword id="KW-0004">4Fe-4S</keyword>
<keyword id="KW-0408">Iron</keyword>
<keyword id="KW-0411">Iron-sulfur</keyword>
<keyword id="KW-0414">Isoprene biosynthesis</keyword>
<keyword id="KW-0479">Metal-binding</keyword>
<keyword id="KW-0560">Oxidoreductase</keyword>
<name>ISPH_ECOSM</name>
<sequence length="316" mass="34775">MQILLANPRGFCAGVDRAISIVENALAIYGAPIYVRHEVVHNRYVVDSLRERGAIFIEQISEVPDGAILIFSAHGVSQAVRNEAKSRDLTVFDATCPLVTKVHMEVARASRRGEESILIGHAGHPEVEGTMGQYSNPEGGMYLVESPDDVWKLTVKNEEKLSFMTQTTLSVDDTSDVIDALRKRFPKIVGPRKDDICYATTNRQEAVRALAEQAEVVLVVGSKNSSNSNRLAELAQRMGKRAFLIDDAKDIQEEWVKEVKCVGVTAGASAPDILVQNVVARLQQLGGGEAIPLEGREENIVFEVPKELRVDIREVD</sequence>
<proteinExistence type="inferred from homology"/>